<sequence>MAAAGAGPGPGVSAGPGPGAAASATTAEDRETEPVAAGAGEGPSAAPGAEPSSGEAESGDANLVDVSGLETESSNGKDTLEGTGDTSEVMDTQAGSVDEENGRQLGEVELQCGICTKWFTADTFGIDTSSCLPFMTNYSFHCNVCHHSGNTYFLRKQANLKEMCLSALANLTWQSRTQDEHPKTMFSKDKDIIPFIDKYWECMTTRQRPGKMTWPNNIVKTMSKERDVFLVKEHPDPGSKDPEEDYPKFGLLDQDLSNIGPAYDNQKQSSAVSASGNLNGGIAAGSSGKGRGAKRKQQDGGTTGTTKKARSDPLFSAQRLPPHGYPLEHPFNKDGYRYILAEPDPHAPDPEKLELDCWAGKPIPGDLYRACLYERVLLALHDRAPQLKISDDRLTVVGEKGYSMVRASHGVRKGAWYFEITVDEMPPDTAARLGWSQPLGNLQAPLGYDKFSYSWRSKKGTKFHQSIGKHYSSGYGQGDVLGFYINLPEDTETAKSLPDTYKDKALIKFKSYLYFEEKDFVDKAEKSLKQTPHSEIIFYKNGVNQGVAYRDIFEGVYFPAISLYKSCTVSINFGPSFKYPPKDLTYHPMSDMGWGAVVEHTLADVLYHVETEVDGRRSPPWEP</sequence>
<feature type="chain" id="PRO_0000064698" description="Set1/Ash2 histone methyltransferase complex subunit ASH2">
    <location>
        <begin position="1"/>
        <end position="623"/>
    </location>
</feature>
<feature type="domain" description="B30.2/SPRY" evidence="3">
    <location>
        <begin position="355"/>
        <end position="578"/>
    </location>
</feature>
<feature type="zinc finger region" description="PHD-type; atypical" evidence="1">
    <location>
        <begin position="1"/>
        <end position="62"/>
    </location>
</feature>
<feature type="zinc finger region" description="C4-type">
    <location>
        <begin position="112"/>
        <end position="145"/>
    </location>
</feature>
<feature type="region of interest" description="Disordered" evidence="4">
    <location>
        <begin position="1"/>
        <end position="99"/>
    </location>
</feature>
<feature type="region of interest" description="DNA-binding" evidence="1">
    <location>
        <begin position="63"/>
        <end position="172"/>
    </location>
</feature>
<feature type="region of interest" description="Disordered" evidence="4">
    <location>
        <begin position="230"/>
        <end position="326"/>
    </location>
</feature>
<feature type="region of interest" description="Interaction with RBBP5" evidence="2">
    <location>
        <begin position="311"/>
        <end position="623"/>
    </location>
</feature>
<feature type="compositionally biased region" description="Gly residues" evidence="4">
    <location>
        <begin position="1"/>
        <end position="18"/>
    </location>
</feature>
<feature type="compositionally biased region" description="Low complexity" evidence="4">
    <location>
        <begin position="36"/>
        <end position="56"/>
    </location>
</feature>
<feature type="compositionally biased region" description="Polar residues" evidence="4">
    <location>
        <begin position="84"/>
        <end position="95"/>
    </location>
</feature>
<feature type="compositionally biased region" description="Basic and acidic residues" evidence="4">
    <location>
        <begin position="230"/>
        <end position="247"/>
    </location>
</feature>
<feature type="compositionally biased region" description="Polar residues" evidence="4">
    <location>
        <begin position="265"/>
        <end position="277"/>
    </location>
</feature>
<feature type="compositionally biased region" description="Gly residues" evidence="4">
    <location>
        <begin position="278"/>
        <end position="290"/>
    </location>
</feature>
<feature type="modified residue" description="Phosphoserine" evidence="8">
    <location>
        <position position="96"/>
    </location>
</feature>
<feature type="modified residue" description="Asymmetric dimethylarginine; by PRMT1 and PRMT5" evidence="2">
    <location>
        <position position="291"/>
    </location>
</feature>
<feature type="modified residue" description="Phosphoserine" evidence="2">
    <location>
        <position position="311"/>
    </location>
</feature>
<feature type="sequence conflict" description="In Ref. 1; BAA35128." evidence="7" ref="1">
    <original>L</original>
    <variation>V</variation>
    <location>
        <position position="439"/>
    </location>
</feature>
<feature type="sequence conflict" description="In Ref. 1; BAA35128." evidence="7" ref="1">
    <original>WRSK</original>
    <variation>LAAS</variation>
    <location>
        <begin position="455"/>
        <end position="458"/>
    </location>
</feature>
<feature type="sequence conflict" description="In Ref. 1; BAA35128." evidence="7" ref="1">
    <original>PPWEP</original>
    <variation>HPGNPNQSLLLVTL</variation>
    <location>
        <begin position="619"/>
        <end position="623"/>
    </location>
</feature>
<accession>Q91X20</accession>
<accession>Q3UIF9</accession>
<accession>Q9Z2X4</accession>
<gene>
    <name type="primary">Ash2l</name>
</gene>
<reference key="1">
    <citation type="journal article" date="1999" name="Cytogenet. Cell Genet.">
        <title>Cloning and characterization of ASH2L and ash2l, human and mouse homologs of the Drosophila ash2 gene.</title>
        <authorList>
            <person name="Ikegawa S."/>
            <person name="Isomura M."/>
            <person name="Koshizuka Y."/>
            <person name="Nakamura Y."/>
        </authorList>
    </citation>
    <scope>NUCLEOTIDE SEQUENCE [MRNA]</scope>
    <scope>TISSUE SPECIFICITY</scope>
</reference>
<reference key="2">
    <citation type="journal article" date="2005" name="Science">
        <title>The transcriptional landscape of the mammalian genome.</title>
        <authorList>
            <person name="Carninci P."/>
            <person name="Kasukawa T."/>
            <person name="Katayama S."/>
            <person name="Gough J."/>
            <person name="Frith M.C."/>
            <person name="Maeda N."/>
            <person name="Oyama R."/>
            <person name="Ravasi T."/>
            <person name="Lenhard B."/>
            <person name="Wells C."/>
            <person name="Kodzius R."/>
            <person name="Shimokawa K."/>
            <person name="Bajic V.B."/>
            <person name="Brenner S.E."/>
            <person name="Batalov S."/>
            <person name="Forrest A.R."/>
            <person name="Zavolan M."/>
            <person name="Davis M.J."/>
            <person name="Wilming L.G."/>
            <person name="Aidinis V."/>
            <person name="Allen J.E."/>
            <person name="Ambesi-Impiombato A."/>
            <person name="Apweiler R."/>
            <person name="Aturaliya R.N."/>
            <person name="Bailey T.L."/>
            <person name="Bansal M."/>
            <person name="Baxter L."/>
            <person name="Beisel K.W."/>
            <person name="Bersano T."/>
            <person name="Bono H."/>
            <person name="Chalk A.M."/>
            <person name="Chiu K.P."/>
            <person name="Choudhary V."/>
            <person name="Christoffels A."/>
            <person name="Clutterbuck D.R."/>
            <person name="Crowe M.L."/>
            <person name="Dalla E."/>
            <person name="Dalrymple B.P."/>
            <person name="de Bono B."/>
            <person name="Della Gatta G."/>
            <person name="di Bernardo D."/>
            <person name="Down T."/>
            <person name="Engstrom P."/>
            <person name="Fagiolini M."/>
            <person name="Faulkner G."/>
            <person name="Fletcher C.F."/>
            <person name="Fukushima T."/>
            <person name="Furuno M."/>
            <person name="Futaki S."/>
            <person name="Gariboldi M."/>
            <person name="Georgii-Hemming P."/>
            <person name="Gingeras T.R."/>
            <person name="Gojobori T."/>
            <person name="Green R.E."/>
            <person name="Gustincich S."/>
            <person name="Harbers M."/>
            <person name="Hayashi Y."/>
            <person name="Hensch T.K."/>
            <person name="Hirokawa N."/>
            <person name="Hill D."/>
            <person name="Huminiecki L."/>
            <person name="Iacono M."/>
            <person name="Ikeo K."/>
            <person name="Iwama A."/>
            <person name="Ishikawa T."/>
            <person name="Jakt M."/>
            <person name="Kanapin A."/>
            <person name="Katoh M."/>
            <person name="Kawasawa Y."/>
            <person name="Kelso J."/>
            <person name="Kitamura H."/>
            <person name="Kitano H."/>
            <person name="Kollias G."/>
            <person name="Krishnan S.P."/>
            <person name="Kruger A."/>
            <person name="Kummerfeld S.K."/>
            <person name="Kurochkin I.V."/>
            <person name="Lareau L.F."/>
            <person name="Lazarevic D."/>
            <person name="Lipovich L."/>
            <person name="Liu J."/>
            <person name="Liuni S."/>
            <person name="McWilliam S."/>
            <person name="Madan Babu M."/>
            <person name="Madera M."/>
            <person name="Marchionni L."/>
            <person name="Matsuda H."/>
            <person name="Matsuzawa S."/>
            <person name="Miki H."/>
            <person name="Mignone F."/>
            <person name="Miyake S."/>
            <person name="Morris K."/>
            <person name="Mottagui-Tabar S."/>
            <person name="Mulder N."/>
            <person name="Nakano N."/>
            <person name="Nakauchi H."/>
            <person name="Ng P."/>
            <person name="Nilsson R."/>
            <person name="Nishiguchi S."/>
            <person name="Nishikawa S."/>
            <person name="Nori F."/>
            <person name="Ohara O."/>
            <person name="Okazaki Y."/>
            <person name="Orlando V."/>
            <person name="Pang K.C."/>
            <person name="Pavan W.J."/>
            <person name="Pavesi G."/>
            <person name="Pesole G."/>
            <person name="Petrovsky N."/>
            <person name="Piazza S."/>
            <person name="Reed J."/>
            <person name="Reid J.F."/>
            <person name="Ring B.Z."/>
            <person name="Ringwald M."/>
            <person name="Rost B."/>
            <person name="Ruan Y."/>
            <person name="Salzberg S.L."/>
            <person name="Sandelin A."/>
            <person name="Schneider C."/>
            <person name="Schoenbach C."/>
            <person name="Sekiguchi K."/>
            <person name="Semple C.A."/>
            <person name="Seno S."/>
            <person name="Sessa L."/>
            <person name="Sheng Y."/>
            <person name="Shibata Y."/>
            <person name="Shimada H."/>
            <person name="Shimada K."/>
            <person name="Silva D."/>
            <person name="Sinclair B."/>
            <person name="Sperling S."/>
            <person name="Stupka E."/>
            <person name="Sugiura K."/>
            <person name="Sultana R."/>
            <person name="Takenaka Y."/>
            <person name="Taki K."/>
            <person name="Tammoja K."/>
            <person name="Tan S.L."/>
            <person name="Tang S."/>
            <person name="Taylor M.S."/>
            <person name="Tegner J."/>
            <person name="Teichmann S.A."/>
            <person name="Ueda H.R."/>
            <person name="van Nimwegen E."/>
            <person name="Verardo R."/>
            <person name="Wei C.L."/>
            <person name="Yagi K."/>
            <person name="Yamanishi H."/>
            <person name="Zabarovsky E."/>
            <person name="Zhu S."/>
            <person name="Zimmer A."/>
            <person name="Hide W."/>
            <person name="Bult C."/>
            <person name="Grimmond S.M."/>
            <person name="Teasdale R.D."/>
            <person name="Liu E.T."/>
            <person name="Brusic V."/>
            <person name="Quackenbush J."/>
            <person name="Wahlestedt C."/>
            <person name="Mattick J.S."/>
            <person name="Hume D.A."/>
            <person name="Kai C."/>
            <person name="Sasaki D."/>
            <person name="Tomaru Y."/>
            <person name="Fukuda S."/>
            <person name="Kanamori-Katayama M."/>
            <person name="Suzuki M."/>
            <person name="Aoki J."/>
            <person name="Arakawa T."/>
            <person name="Iida J."/>
            <person name="Imamura K."/>
            <person name="Itoh M."/>
            <person name="Kato T."/>
            <person name="Kawaji H."/>
            <person name="Kawagashira N."/>
            <person name="Kawashima T."/>
            <person name="Kojima M."/>
            <person name="Kondo S."/>
            <person name="Konno H."/>
            <person name="Nakano K."/>
            <person name="Ninomiya N."/>
            <person name="Nishio T."/>
            <person name="Okada M."/>
            <person name="Plessy C."/>
            <person name="Shibata K."/>
            <person name="Shiraki T."/>
            <person name="Suzuki S."/>
            <person name="Tagami M."/>
            <person name="Waki K."/>
            <person name="Watahiki A."/>
            <person name="Okamura-Oho Y."/>
            <person name="Suzuki H."/>
            <person name="Kawai J."/>
            <person name="Hayashizaki Y."/>
        </authorList>
    </citation>
    <scope>NUCLEOTIDE SEQUENCE [LARGE SCALE MRNA]</scope>
    <source>
        <strain>C57BL/6J</strain>
        <strain>NOD</strain>
        <tissue>Amnion</tissue>
        <tissue>Thymus</tissue>
    </source>
</reference>
<reference key="3">
    <citation type="journal article" date="2004" name="Genome Res.">
        <title>The status, quality, and expansion of the NIH full-length cDNA project: the Mammalian Gene Collection (MGC).</title>
        <authorList>
            <consortium name="The MGC Project Team"/>
        </authorList>
    </citation>
    <scope>NUCLEOTIDE SEQUENCE [LARGE SCALE MRNA]</scope>
    <source>
        <tissue>Liver</tissue>
    </source>
</reference>
<reference key="4">
    <citation type="journal article" date="2010" name="Cell">
        <title>A tissue-specific atlas of mouse protein phosphorylation and expression.</title>
        <authorList>
            <person name="Huttlin E.L."/>
            <person name="Jedrychowski M.P."/>
            <person name="Elias J.E."/>
            <person name="Goswami T."/>
            <person name="Rad R."/>
            <person name="Beausoleil S.A."/>
            <person name="Villen J."/>
            <person name="Haas W."/>
            <person name="Sowa M.E."/>
            <person name="Gygi S.P."/>
        </authorList>
    </citation>
    <scope>PHOSPHORYLATION [LARGE SCALE ANALYSIS] AT SER-96</scope>
    <scope>IDENTIFICATION BY MASS SPECTROMETRY [LARGE SCALE ANALYSIS]</scope>
    <source>
        <tissue>Brain</tissue>
        <tissue>Kidney</tissue>
        <tissue>Spleen</tissue>
        <tissue>Testis</tissue>
    </source>
</reference>
<reference key="5">
    <citation type="journal article" date="2011" name="Cell">
        <title>Role for Dpy-30 in ES cell-fate specification by regulation of H3K4 methylation within bivalent domains.</title>
        <authorList>
            <person name="Jiang H."/>
            <person name="Shukla A."/>
            <person name="Wang X."/>
            <person name="Chen W.Y."/>
            <person name="Bernstein B.E."/>
            <person name="Roeder R.G."/>
        </authorList>
    </citation>
    <scope>IDENTIFICATION IN A COMPLEX WITH RBBP5; DPY30; KMT2A; KMT2D AND WDR5</scope>
</reference>
<comment type="function">
    <text evidence="2">Transcriptional regulator (By similarity). Component or associated component of some histone methyltransferase complexes which regulates transcription through recruitment of those complexes to gene promoters (By similarity). Component of the Set1/Ash2 histone methyltransferase (HMT) complex, a complex that specifically methylates 'Lys-4' of histone H3, but not if the neighboring 'Lys-9' residue is already methylated (By similarity). As part of the MLL1/MLL complex it is involved in methylation and dimethylation at 'Lys-4' of histone H3 (By similarity). May play a role in hematopoiesis (By similarity). In association with RBBP5 and WDR5, stimulates the histone methyltransferase activities of KMT2A, KMT2B, KMT2C, KMT2D, SETD1A and SETD1B (By similarity).</text>
</comment>
<comment type="subunit">
    <text evidence="2 6">Interacts with HCFC1 (By similarity). Core component of several methyltransferase-containing complexes including MLL1/MLL, MLL2/3 (also named ASCOM complex) and MLL4/WBP7 (By similarity). Each complex is at least composed of ASH2L, RBBP5, WDR5, DPY30, one or more specific histone methyltransferases (KMT2A/MLL1, KMT2D/MLL2, KMT2C/MLL3 and KMT2B/MLL4), and the facultative components PAGR1, BACC1, CHD8, E2F6, HCFC1, HCFC2, HSP70, INO80C, KDM6A, KANSL1, LAS1L, MAX, MCRS1, MEN1, MGA, KAT8/MOF, NCOA6, PAXIP1/PTIP, PELP1, PHF20, PRP31, RING2, RUVB1/TIP49A, RUVB2/TIP49B, SENP3, TAF1, TAF4, TAF6, TAF7, TAF9, TEX10 and alpha- and beta-tubulin (By similarity). Component of the SET1 complex, at least composed of the catalytic subunit (SETD1A or SETD1B), WDR5, WDR82, RBBP5, ASH2L/ASH2, CXXC1/CFP1, HCFC1 and DPY30 (By similarity). Found in a complex with RBBP5, ASH2L, DPY30, KMT2A, KMT2D and WDR5 (PubMed:21335234). Component of a histone methylation complex composed of at least ZNF335, RBBP5, ASH2L and WDR5; the complex may have histone H3-specific methyltransferase activity, however does not have specificity for 'Lys-4' of histone H3 (By similarity). Within the complex, interacts with ZNF335 (By similarity). Interacts with RBBP5 (By similarity). Components of this complex may associate with components of a nuclear receptor-mediated transcription complex to form a complex at least composed of ZNF335, HCFC1, CCAR2, EMSY, MKI67, RBBP5, ASH2L and WDR5 (By similarity). Within this complex also interacts with CCAR2 and EMSY (By similarity). Interacts with DPY30 (By similarity). Interacts with SETD1A and SETD1B (By similarity).</text>
</comment>
<comment type="interaction">
    <interactant intactId="EBI-1556554">
        <id>Q91X20</id>
    </interactant>
    <interactant intactId="EBI-1556543">
        <id>Q8BX09</id>
        <label>Rbbp5</label>
    </interactant>
    <organismsDiffer>false</organismsDiffer>
    <experiments>10</experiments>
</comment>
<comment type="interaction">
    <interactant intactId="EBI-1556554">
        <id>Q91X20</id>
    </interactant>
    <interactant intactId="EBI-15703453">
        <id>Q91ZK0</id>
        <label>Tfap2d</label>
    </interactant>
    <organismsDiffer>false</organismsDiffer>
    <experiments>4</experiments>
</comment>
<comment type="subcellular location">
    <subcellularLocation>
        <location evidence="7">Nucleus</location>
    </subcellularLocation>
</comment>
<comment type="tissue specificity">
    <text evidence="5">Ubiquitously expressed, with abundant expression in the heart, skeletal muscle and kidney. Low expression is seen in spleen, lung and testis.</text>
</comment>
<comment type="PTM">
    <text evidence="1">Both monomethylated and dimethylated on arginine residues in the C-terminus. Arg-291 is the major site. Methylation is not required for nuclear localization, nor for MLL complex integrity or maintenance of global histone H3K4me3 levels (By similarity).</text>
</comment>
<proteinExistence type="evidence at protein level"/>
<name>ASH2L_MOUSE</name>
<evidence type="ECO:0000250" key="1"/>
<evidence type="ECO:0000250" key="2">
    <source>
        <dbReference type="UniProtKB" id="Q9UBL3"/>
    </source>
</evidence>
<evidence type="ECO:0000255" key="3">
    <source>
        <dbReference type="PROSITE-ProRule" id="PRU00548"/>
    </source>
</evidence>
<evidence type="ECO:0000256" key="4">
    <source>
        <dbReference type="SAM" id="MobiDB-lite"/>
    </source>
</evidence>
<evidence type="ECO:0000269" key="5">
    <source>
    </source>
</evidence>
<evidence type="ECO:0000269" key="6">
    <source>
    </source>
</evidence>
<evidence type="ECO:0000305" key="7"/>
<evidence type="ECO:0007744" key="8">
    <source>
    </source>
</evidence>
<protein>
    <recommendedName>
        <fullName>Set1/Ash2 histone methyltransferase complex subunit ASH2</fullName>
    </recommendedName>
    <alternativeName>
        <fullName>ASH2-like protein</fullName>
    </alternativeName>
</protein>
<keyword id="KW-0156">Chromatin regulator</keyword>
<keyword id="KW-0238">DNA-binding</keyword>
<keyword id="KW-0479">Metal-binding</keyword>
<keyword id="KW-0488">Methylation</keyword>
<keyword id="KW-0539">Nucleus</keyword>
<keyword id="KW-0597">Phosphoprotein</keyword>
<keyword id="KW-1185">Reference proteome</keyword>
<keyword id="KW-0804">Transcription</keyword>
<keyword id="KW-0805">Transcription regulation</keyword>
<keyword id="KW-0862">Zinc</keyword>
<keyword id="KW-0863">Zinc-finger</keyword>
<dbReference type="EMBL" id="AB020983">
    <property type="protein sequence ID" value="BAA35128.1"/>
    <property type="molecule type" value="mRNA"/>
</dbReference>
<dbReference type="EMBL" id="BC012957">
    <property type="protein sequence ID" value="AAH12957.1"/>
    <property type="molecule type" value="mRNA"/>
</dbReference>
<dbReference type="EMBL" id="AK087934">
    <property type="protein sequence ID" value="BAC40047.1"/>
    <property type="molecule type" value="mRNA"/>
</dbReference>
<dbReference type="EMBL" id="AK146938">
    <property type="protein sequence ID" value="BAE27547.1"/>
    <property type="molecule type" value="mRNA"/>
</dbReference>
<dbReference type="CCDS" id="CCDS40307.1"/>
<dbReference type="RefSeq" id="NP_035921.2">
    <property type="nucleotide sequence ID" value="NM_011791.3"/>
</dbReference>
<dbReference type="SMR" id="Q91X20"/>
<dbReference type="BioGRID" id="204728">
    <property type="interactions" value="31"/>
</dbReference>
<dbReference type="CORUM" id="Q91X20"/>
<dbReference type="DIP" id="DIP-39161N"/>
<dbReference type="FunCoup" id="Q91X20">
    <property type="interactions" value="4025"/>
</dbReference>
<dbReference type="IntAct" id="Q91X20">
    <property type="interactions" value="12"/>
</dbReference>
<dbReference type="MINT" id="Q91X20"/>
<dbReference type="STRING" id="10090.ENSMUSP00000070957"/>
<dbReference type="GlyGen" id="Q91X20">
    <property type="glycosylation" value="1 site, 1 N-linked glycan (1 site)"/>
</dbReference>
<dbReference type="iPTMnet" id="Q91X20"/>
<dbReference type="PhosphoSitePlus" id="Q91X20"/>
<dbReference type="SwissPalm" id="Q91X20"/>
<dbReference type="PaxDb" id="10090-ENSMUSP00000070957"/>
<dbReference type="ProteomicsDB" id="281812"/>
<dbReference type="Pumba" id="Q91X20"/>
<dbReference type="Antibodypedia" id="10852">
    <property type="antibodies" value="431 antibodies from 37 providers"/>
</dbReference>
<dbReference type="DNASU" id="23808"/>
<dbReference type="Ensembl" id="ENSMUST00000068892.15">
    <property type="protein sequence ID" value="ENSMUSP00000070957.8"/>
    <property type="gene ID" value="ENSMUSG00000031575.19"/>
</dbReference>
<dbReference type="GeneID" id="23808"/>
<dbReference type="KEGG" id="mmu:23808"/>
<dbReference type="UCSC" id="uc009lhc.2">
    <property type="organism name" value="mouse"/>
</dbReference>
<dbReference type="AGR" id="MGI:1344416"/>
<dbReference type="CTD" id="9070"/>
<dbReference type="MGI" id="MGI:1344416">
    <property type="gene designation" value="Ash2l"/>
</dbReference>
<dbReference type="VEuPathDB" id="HostDB:ENSMUSG00000031575"/>
<dbReference type="eggNOG" id="KOG2626">
    <property type="taxonomic scope" value="Eukaryota"/>
</dbReference>
<dbReference type="GeneTree" id="ENSGT00390000010474"/>
<dbReference type="InParanoid" id="Q91X20"/>
<dbReference type="OMA" id="CATCSRW"/>
<dbReference type="OrthoDB" id="10266026at2759"/>
<dbReference type="PhylomeDB" id="Q91X20"/>
<dbReference type="TreeFam" id="TF314785"/>
<dbReference type="Reactome" id="R-MMU-201722">
    <property type="pathway name" value="Formation of the beta-catenin:TCF transactivating complex"/>
</dbReference>
<dbReference type="Reactome" id="R-MMU-3214841">
    <property type="pathway name" value="PKMTs methylate histone lysines"/>
</dbReference>
<dbReference type="Reactome" id="R-MMU-8936459">
    <property type="pathway name" value="RUNX1 regulates genes involved in megakaryocyte differentiation and platelet function"/>
</dbReference>
<dbReference type="Reactome" id="R-MMU-9772755">
    <property type="pathway name" value="Formation of WDR5-containing histone-modifying complexes"/>
</dbReference>
<dbReference type="Reactome" id="R-MMU-9818564">
    <property type="pathway name" value="Epigenetic regulation of gene expression by MLL3 and MLL4 complexes"/>
</dbReference>
<dbReference type="BioGRID-ORCS" id="23808">
    <property type="hits" value="21 hits in 86 CRISPR screens"/>
</dbReference>
<dbReference type="ChiTaRS" id="Ash2l">
    <property type="organism name" value="mouse"/>
</dbReference>
<dbReference type="PRO" id="PR:Q91X20"/>
<dbReference type="Proteomes" id="UP000000589">
    <property type="component" value="Chromosome 8"/>
</dbReference>
<dbReference type="RNAct" id="Q91X20">
    <property type="molecule type" value="protein"/>
</dbReference>
<dbReference type="Bgee" id="ENSMUSG00000031575">
    <property type="expression patterns" value="Expressed in seminiferous tubule of testis and 257 other cell types or tissues"/>
</dbReference>
<dbReference type="ExpressionAtlas" id="Q91X20">
    <property type="expression patterns" value="baseline and differential"/>
</dbReference>
<dbReference type="GO" id="GO:0000791">
    <property type="term" value="C:euchromatin"/>
    <property type="evidence" value="ECO:0000314"/>
    <property type="project" value="BHF-UCL"/>
</dbReference>
<dbReference type="GO" id="GO:0035097">
    <property type="term" value="C:histone methyltransferase complex"/>
    <property type="evidence" value="ECO:0000250"/>
    <property type="project" value="UniProtKB"/>
</dbReference>
<dbReference type="GO" id="GO:0071339">
    <property type="term" value="C:MLL1 complex"/>
    <property type="evidence" value="ECO:0000314"/>
    <property type="project" value="UniProtKB"/>
</dbReference>
<dbReference type="GO" id="GO:0005654">
    <property type="term" value="C:nucleoplasm"/>
    <property type="evidence" value="ECO:0000304"/>
    <property type="project" value="Reactome"/>
</dbReference>
<dbReference type="GO" id="GO:0005634">
    <property type="term" value="C:nucleus"/>
    <property type="evidence" value="ECO:0000266"/>
    <property type="project" value="MGI"/>
</dbReference>
<dbReference type="GO" id="GO:0048188">
    <property type="term" value="C:Set1C/COMPASS complex"/>
    <property type="evidence" value="ECO:0000250"/>
    <property type="project" value="UniProtKB"/>
</dbReference>
<dbReference type="GO" id="GO:0003677">
    <property type="term" value="F:DNA binding"/>
    <property type="evidence" value="ECO:0007669"/>
    <property type="project" value="UniProtKB-KW"/>
</dbReference>
<dbReference type="GO" id="GO:0008270">
    <property type="term" value="F:zinc ion binding"/>
    <property type="evidence" value="ECO:0007669"/>
    <property type="project" value="UniProtKB-KW"/>
</dbReference>
<dbReference type="GO" id="GO:0006974">
    <property type="term" value="P:DNA damage response"/>
    <property type="evidence" value="ECO:0000266"/>
    <property type="project" value="MGI"/>
</dbReference>
<dbReference type="GO" id="GO:0045944">
    <property type="term" value="P:positive regulation of transcription by RNA polymerase II"/>
    <property type="evidence" value="ECO:0000316"/>
    <property type="project" value="MGI"/>
</dbReference>
<dbReference type="GO" id="GO:0045815">
    <property type="term" value="P:transcription initiation-coupled chromatin remodeling"/>
    <property type="evidence" value="ECO:0000250"/>
    <property type="project" value="UniProtKB"/>
</dbReference>
<dbReference type="CDD" id="cd15583">
    <property type="entry name" value="PHD_ash2p_like"/>
    <property type="match status" value="1"/>
</dbReference>
<dbReference type="CDD" id="cd12872">
    <property type="entry name" value="SPRY_Ash2"/>
    <property type="match status" value="1"/>
</dbReference>
<dbReference type="FunFam" id="3.90.980.20:FF:000002">
    <property type="entry name" value="Ash2 like, histone lysine methyltransferase complex subunit"/>
    <property type="match status" value="1"/>
</dbReference>
<dbReference type="FunFam" id="2.60.120.920:FF:000008">
    <property type="entry name" value="Set1/Ash2 histone methyltransferase complex subunit ASH2"/>
    <property type="match status" value="1"/>
</dbReference>
<dbReference type="Gene3D" id="2.60.120.920">
    <property type="match status" value="1"/>
</dbReference>
<dbReference type="Gene3D" id="3.90.980.20">
    <property type="match status" value="1"/>
</dbReference>
<dbReference type="InterPro" id="IPR037353">
    <property type="entry name" value="ASH2"/>
</dbReference>
<dbReference type="InterPro" id="IPR049455">
    <property type="entry name" value="ASH2-like_PHD"/>
</dbReference>
<dbReference type="InterPro" id="IPR053835">
    <property type="entry name" value="ASH2L-like_WH"/>
</dbReference>
<dbReference type="InterPro" id="IPR001870">
    <property type="entry name" value="B30.2/SPRY"/>
</dbReference>
<dbReference type="InterPro" id="IPR043136">
    <property type="entry name" value="B30.2/SPRY_sf"/>
</dbReference>
<dbReference type="InterPro" id="IPR013320">
    <property type="entry name" value="ConA-like_dom_sf"/>
</dbReference>
<dbReference type="InterPro" id="IPR003877">
    <property type="entry name" value="SPRY_dom"/>
</dbReference>
<dbReference type="PANTHER" id="PTHR10598">
    <property type="entry name" value="SET1/ASH2 HISTONE METHYLTRANSFERASE COMPLEX SUBUNIT ASH2"/>
    <property type="match status" value="1"/>
</dbReference>
<dbReference type="PANTHER" id="PTHR10598:SF0">
    <property type="entry name" value="SET1_ASH2 HISTONE METHYLTRANSFERASE COMPLEX SUBUNIT ASH2"/>
    <property type="match status" value="1"/>
</dbReference>
<dbReference type="Pfam" id="PF21198">
    <property type="entry name" value="ASH2L-like_WH"/>
    <property type="match status" value="1"/>
</dbReference>
<dbReference type="Pfam" id="PF21257">
    <property type="entry name" value="PHD_ash2p_like"/>
    <property type="match status" value="1"/>
</dbReference>
<dbReference type="Pfam" id="PF00622">
    <property type="entry name" value="SPRY"/>
    <property type="match status" value="1"/>
</dbReference>
<dbReference type="SMART" id="SM00449">
    <property type="entry name" value="SPRY"/>
    <property type="match status" value="1"/>
</dbReference>
<dbReference type="SUPFAM" id="SSF49899">
    <property type="entry name" value="Concanavalin A-like lectins/glucanases"/>
    <property type="match status" value="1"/>
</dbReference>
<dbReference type="PROSITE" id="PS50188">
    <property type="entry name" value="B302_SPRY"/>
    <property type="match status" value="1"/>
</dbReference>
<organism>
    <name type="scientific">Mus musculus</name>
    <name type="common">Mouse</name>
    <dbReference type="NCBI Taxonomy" id="10090"/>
    <lineage>
        <taxon>Eukaryota</taxon>
        <taxon>Metazoa</taxon>
        <taxon>Chordata</taxon>
        <taxon>Craniata</taxon>
        <taxon>Vertebrata</taxon>
        <taxon>Euteleostomi</taxon>
        <taxon>Mammalia</taxon>
        <taxon>Eutheria</taxon>
        <taxon>Euarchontoglires</taxon>
        <taxon>Glires</taxon>
        <taxon>Rodentia</taxon>
        <taxon>Myomorpha</taxon>
        <taxon>Muroidea</taxon>
        <taxon>Muridae</taxon>
        <taxon>Murinae</taxon>
        <taxon>Mus</taxon>
        <taxon>Mus</taxon>
    </lineage>
</organism>